<name>TEPS3_ANOGA</name>
<sequence>MWQFIRSRILTVIIFIGAAHGLLVVGPKFIRANQEYTLVISNFNSQLSKVDLLLKLEGETDNGLSVLNVTKMVDVRRNMNRMINFNMPEDLTAGNYKITIDGQRGFSFHKEAELVYLSKSISGLIQVDKPVFKPGDTVNFRVIVLDTELKPPARVKSVHVTIRDPQRNVIRKWSTAKLYAGVFESDLQIAPTPMLGVWNISVEVEGEELVSKTFEVKEYVLSTFDVQVMPSVIPLEEHQAVNLTIEANYHFGKPVQGVAKVELYLDDDKLNQKKELTVYGKGQVELRFDNFAMDADQQDVRVKVSFIEQYTNRTVVKQSQITVYRYAYRVELIKESPQFRPGLPFKCALQFTHHDGTPAKGITGKVEVSDVGFETTKTSDNDGLIKLELQPSEGSEQLGINFNAVDGFFFYEDVNKVETVTDAYIKLELKSPIKRNKLMRFMVTCTERMTFFVYYVMSKGNIIDAGFMRPNKQTKYLLQLNATEKMIPKAKILIATVAGRTVVYDYADLDFQELRNNFDLSIDEQEIKPGRQIELSMSGRPGAYVGLAAYDKALLLFNKNHDLFWEDIGQVFDGFHAINENEFDIFHSLGLFARTLDDILFDSANEKTGRNALQSGKPIGKLVSYRTNFQESWLWKNVSIGRSGSRKLIEVVPDTTTSWYLTGFSIDPVYGLGIIKKPIQFTTVQPFYIVENLPYSIKRGEAVVLQFTLFNNLGAEYIADVTLYNVANQTEFVGRPDTDLSYTKSVSVPPKVGVPISFLIKARKLGEMAVRVKASIMLGHETDALEKVIRVMPESLAQPKMDTSFFCFDDYKNQTFPFNLDINKKADNGSKKIEFRLNPNLLTMVIKNLDNLLAVPTGCGEQNMVKFVPNILVLDYLYATGSKEQHLIDKATNLLRQGYQNQMRYRQTDGSFGVWEKSGSSVFLTAFVATSMQTASKYMNDIDAAMVEKALDWLASKQHSSGRFDETGKVWHKDMQGGLRNGVALTSYVLTALLENDIAKVKHAVVIQNGMNYLSNQLAFINNAYDLSIATYAMMLNGHTMKKEALDKLIDMSISDNNKKERYWGTTNQIETTAYALLSFVMAEKYLDGIPIMNWLVNQRYVTGSFPRTQDTFVGLKALTKLAEKISPSRNDYTVQLKYKKSTKYFNINSEQIDFQNFLEIPEDTKKLEINVGGIGFGLLEVIYQFDLNLVNFEHRFKLDLEKQNTGSDYELRLRVCANYIPELTDSQSNMALIEVTLPSGYVVDRNPISEQTTVNPIQNMEIRYGGTSVVLYYYNMGTERNCFTVTAYRRFKVALKRPAYVVVYDYYNTNLNAIKVYEVDKQNVCEICEEEDCPAEC</sequence>
<feature type="signal peptide" evidence="3">
    <location>
        <begin position="1"/>
        <end position="21"/>
    </location>
</feature>
<feature type="chain" id="PRO_0000455725" description="Thioester-containing protein 1 allele S3" evidence="3">
    <location>
        <begin position="22"/>
        <end position="1338"/>
    </location>
</feature>
<feature type="chain" id="PRO_0000455726" description="Thioester-containing protein 1 N-terminal" evidence="18">
    <location>
        <begin position="22"/>
        <end status="unknown"/>
    </location>
</feature>
<feature type="chain" id="PRO_0000455727" description="Thioester-containing protein 1 C-terminal" evidence="18">
    <location>
        <begin status="unknown"/>
        <end position="1338"/>
    </location>
</feature>
<feature type="region of interest" description="May contain the cleavage site" evidence="1">
    <location>
        <begin position="580"/>
        <end position="609"/>
    </location>
</feature>
<feature type="glycosylation site" description="N-linked (GlcNAc...) asparagine" evidence="4">
    <location>
        <position position="68"/>
    </location>
</feature>
<feature type="glycosylation site" description="N-linked (GlcNAc...) asparagine" evidence="4">
    <location>
        <position position="199"/>
    </location>
</feature>
<feature type="glycosylation site" description="N-linked (GlcNAc...) asparagine" evidence="4">
    <location>
        <position position="242"/>
    </location>
</feature>
<feature type="glycosylation site" description="N-linked (GlcNAc...) asparagine" evidence="4">
    <location>
        <position position="312"/>
    </location>
</feature>
<feature type="glycosylation site" description="N-linked (GlcNAc...) asparagine" evidence="4">
    <location>
        <position position="481"/>
    </location>
</feature>
<feature type="glycosylation site" description="N-linked (GlcNAc...) asparagine" evidence="4">
    <location>
        <position position="637"/>
    </location>
</feature>
<feature type="glycosylation site" description="N-linked (GlcNAc...) asparagine" evidence="4">
    <location>
        <position position="728"/>
    </location>
</feature>
<feature type="glycosylation site" description="N-linked (GlcNAc...) asparagine" evidence="4">
    <location>
        <position position="813"/>
    </location>
</feature>
<feature type="glycosylation site" description="N-linked (GlcNAc...) asparagine" evidence="4">
    <location>
        <position position="828"/>
    </location>
</feature>
<feature type="disulfide bond" evidence="2">
    <location>
        <begin position="1217"/>
        <end position="1283"/>
    </location>
</feature>
<feature type="disulfide bond" evidence="2">
    <location>
        <begin position="1326"/>
        <end position="1338"/>
    </location>
</feature>
<feature type="disulfide bond" evidence="2">
    <location>
        <begin position="1329"/>
        <end position="1334"/>
    </location>
</feature>
<feature type="cross-link" description="Isoglutamyl cysteine thioester (Cys-Gln)" evidence="2">
    <location>
        <begin position="859"/>
        <end position="862"/>
    </location>
</feature>
<evidence type="ECO:0000250" key="1">
    <source>
        <dbReference type="UniProtKB" id="C9XI66"/>
    </source>
</evidence>
<evidence type="ECO:0000250" key="2">
    <source>
        <dbReference type="UniProtKB" id="Q9GYW4"/>
    </source>
</evidence>
<evidence type="ECO:0000255" key="3"/>
<evidence type="ECO:0000255" key="4">
    <source>
        <dbReference type="PROSITE-ProRule" id="PRU00498"/>
    </source>
</evidence>
<evidence type="ECO:0000269" key="5">
    <source>
    </source>
</evidence>
<evidence type="ECO:0000269" key="6">
    <source>
    </source>
</evidence>
<evidence type="ECO:0000269" key="7">
    <source>
    </source>
</evidence>
<evidence type="ECO:0000269" key="8">
    <source>
    </source>
</evidence>
<evidence type="ECO:0000269" key="9">
    <source>
    </source>
</evidence>
<evidence type="ECO:0000269" key="10">
    <source>
    </source>
</evidence>
<evidence type="ECO:0000269" key="11">
    <source>
    </source>
</evidence>
<evidence type="ECO:0000269" key="12">
    <source>
    </source>
</evidence>
<evidence type="ECO:0000269" key="13">
    <source>
    </source>
</evidence>
<evidence type="ECO:0000303" key="14">
    <source>
    </source>
</evidence>
<evidence type="ECO:0000303" key="15">
    <source>
    </source>
</evidence>
<evidence type="ECO:0000303" key="16">
    <source>
    </source>
</evidence>
<evidence type="ECO:0000305" key="17"/>
<evidence type="ECO:0000305" key="18">
    <source>
    </source>
</evidence>
<evidence type="ECO:0000312" key="19">
    <source>
        <dbReference type="EMBL" id="CBA02642.1"/>
    </source>
</evidence>
<dbReference type="EMBL" id="FN431782">
    <property type="protein sequence ID" value="CBA02642.1"/>
    <property type="molecule type" value="Genomic_DNA"/>
</dbReference>
<dbReference type="SMR" id="C9XI63"/>
<dbReference type="GlyCosmos" id="C9XI63">
    <property type="glycosylation" value="9 sites, No reported glycans"/>
</dbReference>
<dbReference type="VEuPathDB" id="VectorBase:AGAMI1_007003"/>
<dbReference type="VEuPathDB" id="VectorBase:AGAP010815"/>
<dbReference type="HOGENOM" id="CLU_001634_5_3_1"/>
<dbReference type="Proteomes" id="UP000007062">
    <property type="component" value="Unplaced"/>
</dbReference>
<dbReference type="GO" id="GO:0005576">
    <property type="term" value="C:extracellular region"/>
    <property type="evidence" value="ECO:0000314"/>
    <property type="project" value="UniProtKB"/>
</dbReference>
<dbReference type="GO" id="GO:0005615">
    <property type="term" value="C:extracellular space"/>
    <property type="evidence" value="ECO:0000314"/>
    <property type="project" value="UniProtKB"/>
</dbReference>
<dbReference type="GO" id="GO:0004866">
    <property type="term" value="F:endopeptidase inhibitor activity"/>
    <property type="evidence" value="ECO:0007669"/>
    <property type="project" value="InterPro"/>
</dbReference>
<dbReference type="GO" id="GO:0140367">
    <property type="term" value="P:antibacterial innate immune response"/>
    <property type="evidence" value="ECO:0000315"/>
    <property type="project" value="UniProtKB"/>
</dbReference>
<dbReference type="GO" id="GO:0061760">
    <property type="term" value="P:antifungal innate immune response"/>
    <property type="evidence" value="ECO:0000315"/>
    <property type="project" value="UniProtKB"/>
</dbReference>
<dbReference type="GO" id="GO:0098743">
    <property type="term" value="P:cell aggregation"/>
    <property type="evidence" value="ECO:0000315"/>
    <property type="project" value="UniProtKB"/>
</dbReference>
<dbReference type="GO" id="GO:0140546">
    <property type="term" value="P:defense response to symbiont"/>
    <property type="evidence" value="ECO:0000314"/>
    <property type="project" value="UniProtKB"/>
</dbReference>
<dbReference type="GO" id="GO:0048023">
    <property type="term" value="P:positive regulation of melanin biosynthetic process"/>
    <property type="evidence" value="ECO:0000315"/>
    <property type="project" value="UniProtKB"/>
</dbReference>
<dbReference type="CDD" id="cd02897">
    <property type="entry name" value="A2M_2"/>
    <property type="match status" value="1"/>
</dbReference>
<dbReference type="FunFam" id="2.60.40.1930:FF:000001">
    <property type="entry name" value="CD109 isoform 3"/>
    <property type="match status" value="1"/>
</dbReference>
<dbReference type="Gene3D" id="1.50.10.20">
    <property type="match status" value="1"/>
</dbReference>
<dbReference type="Gene3D" id="2.20.130.20">
    <property type="match status" value="2"/>
</dbReference>
<dbReference type="Gene3D" id="2.60.120.1540">
    <property type="match status" value="1"/>
</dbReference>
<dbReference type="Gene3D" id="2.60.40.1930">
    <property type="match status" value="2"/>
</dbReference>
<dbReference type="Gene3D" id="2.60.40.1940">
    <property type="match status" value="1"/>
</dbReference>
<dbReference type="Gene3D" id="2.60.40.2950">
    <property type="match status" value="1"/>
</dbReference>
<dbReference type="Gene3D" id="2.60.40.690">
    <property type="entry name" value="Alpha-macroglobulin, receptor-binding domain"/>
    <property type="match status" value="1"/>
</dbReference>
<dbReference type="Gene3D" id="2.60.40.10">
    <property type="entry name" value="Immunoglobulins"/>
    <property type="match status" value="2"/>
</dbReference>
<dbReference type="InterPro" id="IPR009048">
    <property type="entry name" value="A-macroglobulin_rcpt-bd"/>
</dbReference>
<dbReference type="InterPro" id="IPR036595">
    <property type="entry name" value="A-macroglobulin_rcpt-bd_sf"/>
</dbReference>
<dbReference type="InterPro" id="IPR050473">
    <property type="entry name" value="A2M/Complement_sys"/>
</dbReference>
<dbReference type="InterPro" id="IPR011625">
    <property type="entry name" value="A2M_N_BRD"/>
</dbReference>
<dbReference type="InterPro" id="IPR041813">
    <property type="entry name" value="A2M_TED"/>
</dbReference>
<dbReference type="InterPro" id="IPR047565">
    <property type="entry name" value="Alpha-macroglob_thiol-ester_cl"/>
</dbReference>
<dbReference type="InterPro" id="IPR011626">
    <property type="entry name" value="Alpha-macroglobulin_TED"/>
</dbReference>
<dbReference type="InterPro" id="IPR013783">
    <property type="entry name" value="Ig-like_fold"/>
</dbReference>
<dbReference type="InterPro" id="IPR001599">
    <property type="entry name" value="Macroglobln_a2"/>
</dbReference>
<dbReference type="InterPro" id="IPR019742">
    <property type="entry name" value="MacrogloblnA2_CS"/>
</dbReference>
<dbReference type="InterPro" id="IPR002890">
    <property type="entry name" value="MG2"/>
</dbReference>
<dbReference type="InterPro" id="IPR041555">
    <property type="entry name" value="MG3"/>
</dbReference>
<dbReference type="InterPro" id="IPR040839">
    <property type="entry name" value="MG4"/>
</dbReference>
<dbReference type="InterPro" id="IPR049135">
    <property type="entry name" value="TEP1_CUB2"/>
</dbReference>
<dbReference type="InterPro" id="IPR008930">
    <property type="entry name" value="Terpenoid_cyclase/PrenylTrfase"/>
</dbReference>
<dbReference type="PANTHER" id="PTHR11412:SF136">
    <property type="entry name" value="CD109 ANTIGEN"/>
    <property type="match status" value="1"/>
</dbReference>
<dbReference type="PANTHER" id="PTHR11412">
    <property type="entry name" value="MACROGLOBULIN / COMPLEMENT"/>
    <property type="match status" value="1"/>
</dbReference>
<dbReference type="Pfam" id="PF00207">
    <property type="entry name" value="A2M"/>
    <property type="match status" value="1"/>
</dbReference>
<dbReference type="Pfam" id="PF07703">
    <property type="entry name" value="A2M_BRD"/>
    <property type="match status" value="1"/>
</dbReference>
<dbReference type="Pfam" id="PF07677">
    <property type="entry name" value="A2M_recep"/>
    <property type="match status" value="1"/>
</dbReference>
<dbReference type="Pfam" id="PF01835">
    <property type="entry name" value="MG2"/>
    <property type="match status" value="1"/>
</dbReference>
<dbReference type="Pfam" id="PF17791">
    <property type="entry name" value="MG3"/>
    <property type="match status" value="1"/>
</dbReference>
<dbReference type="Pfam" id="PF17789">
    <property type="entry name" value="MG4"/>
    <property type="match status" value="1"/>
</dbReference>
<dbReference type="Pfam" id="PF07678">
    <property type="entry name" value="TED_complement"/>
    <property type="match status" value="1"/>
</dbReference>
<dbReference type="Pfam" id="PF21412">
    <property type="entry name" value="TEP1_CUB2"/>
    <property type="match status" value="1"/>
</dbReference>
<dbReference type="SMART" id="SM01360">
    <property type="entry name" value="A2M"/>
    <property type="match status" value="1"/>
</dbReference>
<dbReference type="SMART" id="SM01359">
    <property type="entry name" value="A2M_N_2"/>
    <property type="match status" value="1"/>
</dbReference>
<dbReference type="SMART" id="SM01361">
    <property type="entry name" value="A2M_recep"/>
    <property type="match status" value="1"/>
</dbReference>
<dbReference type="SMART" id="SM01419">
    <property type="entry name" value="Thiol-ester_cl"/>
    <property type="match status" value="1"/>
</dbReference>
<dbReference type="SUPFAM" id="SSF49410">
    <property type="entry name" value="Alpha-macroglobulin receptor domain"/>
    <property type="match status" value="1"/>
</dbReference>
<dbReference type="SUPFAM" id="SSF48239">
    <property type="entry name" value="Terpenoid cyclases/Protein prenyltransferases"/>
    <property type="match status" value="1"/>
</dbReference>
<dbReference type="PROSITE" id="PS00477">
    <property type="entry name" value="ALPHA_2_MACROGLOBULIN"/>
    <property type="match status" value="1"/>
</dbReference>
<accession>C9XI63</accession>
<protein>
    <recommendedName>
        <fullName evidence="16">Thioester-containing protein 1 allele S3</fullName>
        <shortName evidence="14">TEP1s</shortName>
    </recommendedName>
    <alternativeName>
        <fullName evidence="15">TEP1-F</fullName>
    </alternativeName>
    <component>
        <recommendedName>
            <fullName evidence="15">Thioester-containing protein 1 N-terminal</fullName>
            <shortName evidence="15">TEP1-N</shortName>
        </recommendedName>
    </component>
    <component>
        <recommendedName>
            <fullName>Thioester-containing protein 1 C-terminal</fullName>
            <shortName evidence="15">TEP1-C</shortName>
        </recommendedName>
    </component>
</protein>
<gene>
    <name evidence="16" type="primary">TEP1</name>
</gene>
<proteinExistence type="evidence at protein level"/>
<organism evidence="19">
    <name type="scientific">Anopheles gambiae</name>
    <name type="common">African malaria mosquito</name>
    <dbReference type="NCBI Taxonomy" id="7165"/>
    <lineage>
        <taxon>Eukaryota</taxon>
        <taxon>Metazoa</taxon>
        <taxon>Ecdysozoa</taxon>
        <taxon>Arthropoda</taxon>
        <taxon>Hexapoda</taxon>
        <taxon>Insecta</taxon>
        <taxon>Pterygota</taxon>
        <taxon>Neoptera</taxon>
        <taxon>Endopterygota</taxon>
        <taxon>Diptera</taxon>
        <taxon>Nematocera</taxon>
        <taxon>Culicoidea</taxon>
        <taxon>Culicidae</taxon>
        <taxon>Anophelinae</taxon>
        <taxon>Anopheles</taxon>
    </lineage>
</organism>
<reference evidence="19" key="1">
    <citation type="journal article" date="2009" name="Science">
        <title>Dissecting the genetic basis of resistance to malaria parasites in Anopheles gambiae.</title>
        <authorList>
            <person name="Blandin S.A."/>
            <person name="Wang-Sattler R."/>
            <person name="Lamacchia M."/>
            <person name="Gagneur J."/>
            <person name="Lycett G."/>
            <person name="Ning Y."/>
            <person name="Levashina E.A."/>
            <person name="Steinmetz L.M."/>
        </authorList>
    </citation>
    <scope>NUCLEOTIDE SEQUENCE [GENOMIC DNA]</scope>
    <scope>NOMENCLATURE</scope>
    <scope>POLYMORPHISM</scope>
    <source>
        <strain evidence="19">G3</strain>
    </source>
</reference>
<reference evidence="17" key="2">
    <citation type="journal article" date="2004" name="Cell">
        <title>Complement-like protein TEP1 is a determinant of vectorial capacity in the malaria vector Anopheles gambiae.</title>
        <authorList>
            <person name="Blandin S."/>
            <person name="Shiao S.H."/>
            <person name="Moita L.F."/>
            <person name="Janse C.J."/>
            <person name="Waters A.P."/>
            <person name="Kafatos F.C."/>
            <person name="Levashina E.A."/>
        </authorList>
    </citation>
    <scope>FUNCTION</scope>
    <scope>SUBCELLULAR LOCATION</scope>
    <scope>POLYMORPHISM</scope>
    <scope>INDUCTION</scope>
    <scope>DISRUPTION PHENOTYPE</scope>
    <scope>PROTEOLYTIC CLEAVAGE</scope>
    <source>
        <strain evidence="5">G3</strain>
    </source>
</reference>
<reference evidence="17" key="3">
    <citation type="journal article" date="2009" name="Cell Host Microbe">
        <title>Two mosquito LRR proteins function as complement control factors in the TEP1-mediated killing of Plasmodium.</title>
        <authorList>
            <person name="Fraiture M."/>
            <person name="Baxter R.H."/>
            <person name="Steinert S."/>
            <person name="Chelliah Y."/>
            <person name="Frolet C."/>
            <person name="Quispe-Tintaya W."/>
            <person name="Hoffmann J.A."/>
            <person name="Blandin S.A."/>
            <person name="Levashina E.A."/>
        </authorList>
    </citation>
    <scope>SUBUNIT</scope>
    <scope>IDENTIFICATION IN A COMPLEX WITH TEP1; LRIM1 AND APL1C</scope>
    <scope>SUBCELLULAR LOCATION</scope>
    <scope>PROTEOLYTIC CLEAVAGE</scope>
    <source>
        <strain evidence="6">G3</strain>
    </source>
</reference>
<reference evidence="17" key="4">
    <citation type="journal article" date="2012" name="PLoS Pathog.">
        <title>Molecular basis for genetic resistance of Anopheles gambiae to Plasmodium: structural analysis of TEP1 susceptible and resistant alleles.</title>
        <authorList>
            <person name="Le B.V."/>
            <person name="Williams M."/>
            <person name="Logarajah S."/>
            <person name="Baxter R.H."/>
        </authorList>
    </citation>
    <scope>POLYMORPHISM</scope>
</reference>
<reference evidence="17" key="5">
    <citation type="journal article" date="2012" name="PLoS Pathog.">
        <title>The mosquito melanization response is implicated in defense against the entomopathogenic fungus Beauveria bassiana.</title>
        <authorList>
            <person name="Yassine H."/>
            <person name="Kamareddine L."/>
            <person name="Osta M.A."/>
        </authorList>
    </citation>
    <scope>FUNCTION</scope>
    <scope>SUBCELLULAR LOCATION</scope>
    <scope>DISRUPTION PHENOTYPE</scope>
    <source>
        <strain evidence="9">G3</strain>
    </source>
</reference>
<reference evidence="17" key="6">
    <citation type="journal article" date="2013" name="PLoS Pathog.">
        <title>The CLIP-domain serine protease homolog SPCLIP1 regulates complement recruitment to microbial surfaces in the malaria mosquito Anopheles gambiae.</title>
        <authorList>
            <person name="Povelones M."/>
            <person name="Bhagavatula L."/>
            <person name="Yassine H."/>
            <person name="Tan L.A."/>
            <person name="Upton L.M."/>
            <person name="Osta M.A."/>
            <person name="Christophides G.K."/>
        </authorList>
    </citation>
    <scope>FUNCTION</scope>
    <scope>INTERACTION WITH SPCLIP1</scope>
    <scope>SUBCELLULAR LOCATION</scope>
    <scope>PROTEOLYTIC CLEAVAGE</scope>
    <scope>DISRUPTION PHENOTYPE</scope>
    <source>
        <strain evidence="10">G3</strain>
    </source>
</reference>
<reference evidence="17" key="7">
    <citation type="journal article" date="2014" name="J. Innate Immun.">
        <title>A serine protease homolog negatively regulates TEP1 consumption in systemic infections of the malaria vector Anopheles gambiae.</title>
        <authorList>
            <person name="Yassine H."/>
            <person name="Kamareddine L."/>
            <person name="Chamat S."/>
            <person name="Christophides G.K."/>
            <person name="Osta M.A."/>
        </authorList>
    </citation>
    <scope>FUNCTION</scope>
    <scope>SUBCELLULAR LOCATION</scope>
    <scope>PROTEOLYTIC CLEAVAGE</scope>
    <scope>DISRUPTION PHENOTYPE</scope>
    <source>
        <strain evidence="11">G3</strain>
    </source>
</reference>
<reference evidence="17" key="8">
    <citation type="journal article" date="2015" name="PLoS Biol.">
        <title>A New Role of the Mosquito Complement-like Cascade in Male Fertility in Anopheles gambiae.</title>
        <authorList>
            <person name="Pompon J."/>
            <person name="Levashina E.A."/>
        </authorList>
    </citation>
    <scope>POLYMORPHISM</scope>
</reference>
<reference evidence="17" key="9">
    <citation type="journal article" date="2019" name="Insect Biochem. Mol. Biol.">
        <title>Complement-like proteins TEP1, TEP3 and TEP4 are positive regulators of periostial hemocyte aggregation in the mosquito Anopheles gambiae.</title>
        <authorList>
            <person name="Yan Y."/>
            <person name="Hillyer J.F."/>
        </authorList>
    </citation>
    <scope>FUNCTION</scope>
    <scope>DISRUPTION PHENOTYPE</scope>
    <source>
        <strain evidence="13">G3</strain>
    </source>
</reference>
<comment type="function">
    <text evidence="2 5 9 10 11 13">Plays an essential role in the innate immune response against bacteria, fungi and protozoa infection (PubMed:15006349, PubMed:23166497, PubMed:24039584, PubMed:25012124, PubMed:30690067). After proteolytic cleavage, the protein C-terminus binds covalently through a thioester bond to the pathogen surface resulting in pathogen clearance either by melanization or lysis (PubMed:24039584, PubMed:30690067). Initiate the recruitment and activation of a cascade of proteases, mostly of CLIP-domain serine proteases, which leads to the proteolytic cleavage of the prophenoloxidase (PPO) into active phenoloxidase (PO), the rate-limiting enzyme in melanin biosynthesis (PubMed:23166497, PubMed:24039584, PubMed:25012124). In response to parasite P.berghei-mediated infection, binds to and mediates killing of ookinetes, as they egress from midgut epithelial cells into the basal labyrinth, by both lysis and melanization (PubMed:15006349, PubMed:24039584, PubMed:25012124). During bacterial infection, binds to both Gram-positive and Gram-negative bacteria but only promotes phagocytosis of Gram-negative bacteria (PubMed:24039584, PubMed:30690067). Promotes the accumulation of SPCLIP1 onto the surface of P.berghei ookinetes and bacterium E.coli which leads to the melanization of the pathogen (PubMed:24039584). Recruits CLIPA2 to bacteria surface (PubMed:25012124). In response to bacterial infection, required for periostial hemocyte aggregation, but not for the aggregation of sessile hemocytes in non-periostial regions (PubMed:30690067). During the late stage of fungus B.bassiana-mediated infection, required for the initiation of hyphae melanization by binding to the surface of hyphae and recruiting prophenoloxidase PPO to them (PubMed:23166497). Plays a role in male fertility by binding to defective sperm cells and promoting their removal during spermatogenesis (By similarity).</text>
</comment>
<comment type="function">
    <molecule>Thioester-containing protein 1 allele S3</molecule>
    <text evidence="5">Binds to and mediates killing of parasite P.bergei ookinetes by lysis.</text>
</comment>
<comment type="function">
    <molecule>Thioester-containing protein 1 C-terminal</molecule>
    <text evidence="10 13">Binds covalently through a thioester bond to the pathogen surface resulting in pathogen clearance.</text>
</comment>
<comment type="subunit">
    <text evidence="6 10">Heterodimer of a TEP1-N chain and an TEP1-C chain non-covalently linked (PubMed:19286136). Forms a complex composed of TEP1-N and TEP1-C heterodimer, LRIM1 and APL1C; the interaction stabilizes TEP1-N and TEP1-C heterodimer, prevents its binding to tissues while circulating in the hemolymph and protects the thioester bond from hydrolysis (PubMed:19286136). Mature TEP1 and to a lesser extent full-length TEP1 interact with SPCLIP1; the interaction is induced by microbial infection (PubMed:24039584).</text>
</comment>
<comment type="subcellular location">
    <subcellularLocation>
        <location evidence="5 6 9 10 11">Secreted</location>
    </subcellularLocation>
    <text evidence="5 6 9 10 11">Secreted as a full-length protein into the hemolymph.</text>
</comment>
<comment type="induction">
    <text evidence="5">By parasite P.berghei infection; expression picks 24 hours post infection and increases again 4 days post infection.</text>
</comment>
<comment type="PTM">
    <text evidence="2 5 6 10 11">In the hemolymph, the full-length protein is cleaved by an unknow protease into a 75kDa N-terminal (TEP1-N) chain and an 80kDa C-terminal (TEP1-C) chain which remain non-covalently linked (PubMed:15006349, PubMed:19286136, PubMed:24039584, PubMed:25012124). The TEP1-C chain contains the thioester bond which covalently binds to the pathogen surface (By similarity). Cleavage is induced by bacterial infection or aseptic wound injury (PubMed:24039584). During embryonic and pupal development, the cleaved form is the predominant form (By similarity).</text>
</comment>
<comment type="PTM">
    <text evidence="2">N-glycosylated.</text>
</comment>
<comment type="polymorphism">
    <text evidence="5 7 8 12">TEP1 gene is highly polymorphic mainly in the region surrounding the thioester bond (PubMed:19797663). After proteolytic cleavage, TEP1*S alleles are more susceptible to hydrolysis of the intramolecular thioester bond than TEP1*R alleles (PubMed:23055931). Two main alleles have been described, TEP1*S and TEP1*R (PubMed:19797663). TEP1*S1 allele (AC Q9GYW4, strain PEST) or TEP1*S3 allele (this entry, strain G3) confer susceptibility to parasite P. berghei infection while TEP1*R1 allele (AC C9XI66, strain L3-5) confers resistance to P.berghei infection (PubMed:19797663). Approximately 20% of parasites survive in TEP1*S mosquitos and melanization of ookinetes is less efficient (PubMed:15006349, PubMed:19797663). In TEP1*S mosquitos, dead parasites are disposed by lysis, while in TEP1*R mosquitoes are killed both via lysis and melanization (PubMed:15006349). In TEP1*S2 male mosquitos, removal of defective sperm is more efficient resulting in enhanced male fertility (PubMed:26394016).</text>
</comment>
<comment type="disruption phenotype">
    <text evidence="5 9 10 11 13">RNAi-mediated knockdown in females causes a 5-fold increase in the number of oocysts following infection with parasite P.berghei (PubMed:15006349, PubMed:25012124). Inhibits SPCLIP1 binding to P.berghei ookinete surface and to E.coli surface, cleavage of CLIPA8 in the hemolymph and causes a severe decrease in phenoloxidase (PO) activity (PubMed:24039584). In knockdown mosquitos infected with bacterium E.coli, survival is reduced, bacteria proliferation is increased and PO activation is severely reduced (PubMed:25012124). RNAi-mediated knockdown does not affect the number of periostial hemocytes in non-infected mosquitoes; however, reduces the aggregation of hemocytes at the periostial regions in E.coli-infected mosquitos (PubMed:30690067). No difference in the spatial distribution of periostial hemocytes or sessile hemocytes outside the periostial regions in absence or following E.coli infection (PubMed:30690067). Slower E.coli clearance and severe reduction in melanization at the periostial regions (PubMed:30690067). Increased sensitivity to fungus B.bassiana (strain 80.2) infection characterized by reduced mosquito survival and increased levels of hyphal body colonies (PubMed:23166497). Impaired melanization of hyphae, but not of germinating conidia or germ tubes, caused by a failure to recruit prophenoloxidase PPO to hyphae (PubMed:23166497). Loss of phenoloxidase (PO) activity triggered during late but not early fungal infection (PubMed:23166497).</text>
</comment>
<keyword id="KW-1015">Disulfide bond</keyword>
<keyword id="KW-0325">Glycoprotein</keyword>
<keyword id="KW-0391">Immunity</keyword>
<keyword id="KW-1185">Reference proteome</keyword>
<keyword id="KW-0964">Secreted</keyword>
<keyword id="KW-0732">Signal</keyword>
<keyword id="KW-0882">Thioester bond</keyword>